<evidence type="ECO:0000256" key="1">
    <source>
        <dbReference type="SAM" id="MobiDB-lite"/>
    </source>
</evidence>
<dbReference type="EMBL" id="X61395">
    <property type="protein sequence ID" value="CAA43666.1"/>
    <property type="molecule type" value="Genomic_DNA"/>
</dbReference>
<dbReference type="EMBL" id="X57076">
    <property type="protein sequence ID" value="CAA40361.1"/>
    <property type="molecule type" value="mRNA"/>
</dbReference>
<dbReference type="PIR" id="S19129">
    <property type="entry name" value="S19129"/>
</dbReference>
<dbReference type="SMR" id="Q00451"/>
<dbReference type="STRING" id="4081.Q00451"/>
<dbReference type="InParanoid" id="Q00451"/>
<dbReference type="Proteomes" id="UP000004994">
    <property type="component" value="Unplaced"/>
</dbReference>
<dbReference type="CDD" id="cd01958">
    <property type="entry name" value="HPS_like"/>
    <property type="match status" value="1"/>
</dbReference>
<dbReference type="Gene3D" id="1.10.110.10">
    <property type="entry name" value="Plant lipid-transfer and hydrophobic proteins"/>
    <property type="match status" value="1"/>
</dbReference>
<dbReference type="InterPro" id="IPR036312">
    <property type="entry name" value="Bifun_inhib/LTP/seed_sf"/>
</dbReference>
<dbReference type="InterPro" id="IPR027923">
    <property type="entry name" value="Hydrophob_seed_dom"/>
</dbReference>
<dbReference type="InterPro" id="IPR051636">
    <property type="entry name" value="Plant_LTP/defense-related"/>
</dbReference>
<dbReference type="PANTHER" id="PTHR31731">
    <property type="match status" value="1"/>
</dbReference>
<dbReference type="Pfam" id="PF14547">
    <property type="entry name" value="Hydrophob_seed"/>
    <property type="match status" value="1"/>
</dbReference>
<dbReference type="PRINTS" id="PR01217">
    <property type="entry name" value="PRICHEXTENSN"/>
</dbReference>
<dbReference type="PRINTS" id="PR00021">
    <property type="entry name" value="PRORICH"/>
</dbReference>
<dbReference type="SUPFAM" id="SSF47699">
    <property type="entry name" value="Bifunctional inhibitor/lipid-transfer protein/seed storage 2S albumin"/>
    <property type="match status" value="1"/>
</dbReference>
<accession>Q00451</accession>
<proteinExistence type="evidence at transcript level"/>
<keyword id="KW-1185">Reference proteome</keyword>
<protein>
    <recommendedName>
        <fullName>36.4 kDa proline-rich protein</fullName>
    </recommendedName>
</protein>
<gene>
    <name type="primary">TPRP-F1</name>
</gene>
<sequence length="346" mass="36376">MHVLIACPYCPYPPSTPKHPKLPPKVKPPSTQPPHVKPPSTPKHPKDPPHVKPPSTPKQPPYVKPPTTPKHPPHVKPPSTPKHPKHPPQKPCPPPSHHGPKPPIVKPPHVPRPPIVHPPPIVSPPSTPKPPKTPPFTPKPPSPIPPIVSPPIVYPPITPTPPIVHPPVTPKPPSPTPPIVSPPIVYPPITPTPPVVSPPIIPTPPIVSPPFVPNPPVVIPPPYVPSPPVVTPPIVPTPPTPCPPPPPPPAIIPSPPAQPTCPIDALKLGACVDVLGGLIHIGIGGSAKQTCCPLLGGLVDLDAAICLCTTIRLKLLNINIILPIALQVLIDDCGKYPPKDFKCPST</sequence>
<reference key="1">
    <citation type="journal article" date="1992" name="Plant Mol. Biol.">
        <title>DNA sequence of the tomato fruit expressed proline-rich protein gene TPRP-F1 reveals an intron within the 3 untranslated transcript.</title>
        <authorList>
            <person name="Salts Y."/>
            <person name="Wachs R."/>
            <person name="Kenigsbuch D."/>
            <person name="Gruissem W."/>
            <person name="Barg R."/>
        </authorList>
    </citation>
    <scope>NUCLEOTIDE SEQUENCE [GENOMIC DNA]</scope>
    <source>
        <strain>cv. VFNT Cherry</strain>
        <tissue>Fruit</tissue>
    </source>
</reference>
<reference key="2">
    <citation type="journal article" date="1991" name="Plant Mol. Biol.">
        <title>Sequence coding for a novel proline-rich protein preferentially expressed in young tomato fruit.</title>
        <authorList>
            <person name="Salts Y."/>
            <person name="Wachs R."/>
            <person name="Gruissem W."/>
            <person name="Barg R."/>
        </authorList>
    </citation>
    <scope>NUCLEOTIDE SEQUENCE [MRNA] OF 34-346</scope>
    <source>
        <strain>cv. Arava</strain>
    </source>
</reference>
<name>PRF1_SOLLC</name>
<organism>
    <name type="scientific">Solanum lycopersicum</name>
    <name type="common">Tomato</name>
    <name type="synonym">Lycopersicon esculentum</name>
    <dbReference type="NCBI Taxonomy" id="4081"/>
    <lineage>
        <taxon>Eukaryota</taxon>
        <taxon>Viridiplantae</taxon>
        <taxon>Streptophyta</taxon>
        <taxon>Embryophyta</taxon>
        <taxon>Tracheophyta</taxon>
        <taxon>Spermatophyta</taxon>
        <taxon>Magnoliopsida</taxon>
        <taxon>eudicotyledons</taxon>
        <taxon>Gunneridae</taxon>
        <taxon>Pentapetalae</taxon>
        <taxon>asterids</taxon>
        <taxon>lamiids</taxon>
        <taxon>Solanales</taxon>
        <taxon>Solanaceae</taxon>
        <taxon>Solanoideae</taxon>
        <taxon>Solaneae</taxon>
        <taxon>Solanum</taxon>
        <taxon>Solanum subgen. Lycopersicon</taxon>
    </lineage>
</organism>
<feature type="chain" id="PRO_0000058570" description="36.4 kDa proline-rich protein">
    <location>
        <begin position="1"/>
        <end position="346"/>
    </location>
</feature>
<feature type="region of interest" description="Disordered" evidence="1">
    <location>
        <begin position="11"/>
        <end position="144"/>
    </location>
</feature>
<feature type="compositionally biased region" description="Pro residues" evidence="1">
    <location>
        <begin position="25"/>
        <end position="42"/>
    </location>
</feature>
<feature type="compositionally biased region" description="Pro residues" evidence="1">
    <location>
        <begin position="51"/>
        <end position="81"/>
    </location>
</feature>
<feature type="compositionally biased region" description="Pro residues" evidence="1">
    <location>
        <begin position="89"/>
        <end position="144"/>
    </location>
</feature>